<feature type="chain" id="PRO_0000200696" description="Probable electron transfer flavoprotein-quinone oxidoreductase YdiS">
    <location>
        <begin position="1"/>
        <end position="429"/>
    </location>
</feature>
<feature type="binding site" evidence="1">
    <location>
        <begin position="8"/>
        <end position="22"/>
    </location>
    <ligand>
        <name>FAD</name>
        <dbReference type="ChEBI" id="CHEBI:57692"/>
    </ligand>
</feature>
<name>YDIS_ECOLI</name>
<comment type="function">
    <text>Probably accepts electrons from YdiQ/YdiR and reduces a quinone.</text>
</comment>
<comment type="cofactor">
    <cofactor evidence="2">
        <name>FAD</name>
        <dbReference type="ChEBI" id="CHEBI:57692"/>
    </cofactor>
</comment>
<comment type="similarity">
    <text evidence="2">Belongs to the ETF-QO/FixC family.</text>
</comment>
<evidence type="ECO:0000255" key="1"/>
<evidence type="ECO:0000305" key="2"/>
<proteinExistence type="inferred from homology"/>
<dbReference type="EC" id="1.5.5.-"/>
<dbReference type="EMBL" id="U00096">
    <property type="protein sequence ID" value="AAC74769.1"/>
    <property type="molecule type" value="Genomic_DNA"/>
</dbReference>
<dbReference type="EMBL" id="AP009048">
    <property type="protein sequence ID" value="BAA15468.1"/>
    <property type="molecule type" value="Genomic_DNA"/>
</dbReference>
<dbReference type="PIR" id="C64928">
    <property type="entry name" value="C64928"/>
</dbReference>
<dbReference type="RefSeq" id="NP_416214.1">
    <property type="nucleotide sequence ID" value="NC_000913.3"/>
</dbReference>
<dbReference type="RefSeq" id="WP_001278525.1">
    <property type="nucleotide sequence ID" value="NZ_SSZK01000001.1"/>
</dbReference>
<dbReference type="SMR" id="P77337"/>
<dbReference type="BioGRID" id="4260294">
    <property type="interactions" value="238"/>
</dbReference>
<dbReference type="FunCoup" id="P77337">
    <property type="interactions" value="763"/>
</dbReference>
<dbReference type="IntAct" id="P77337">
    <property type="interactions" value="5"/>
</dbReference>
<dbReference type="STRING" id="511145.b1699"/>
<dbReference type="jPOST" id="P77337"/>
<dbReference type="PaxDb" id="511145-b1699"/>
<dbReference type="EnsemblBacteria" id="AAC74769">
    <property type="protein sequence ID" value="AAC74769"/>
    <property type="gene ID" value="b1699"/>
</dbReference>
<dbReference type="GeneID" id="946212"/>
<dbReference type="KEGG" id="ecj:JW1689"/>
<dbReference type="KEGG" id="eco:b1699"/>
<dbReference type="KEGG" id="ecoc:C3026_09730"/>
<dbReference type="PATRIC" id="fig|1411691.4.peg.558"/>
<dbReference type="EchoBASE" id="EB3735"/>
<dbReference type="eggNOG" id="COG0644">
    <property type="taxonomic scope" value="Bacteria"/>
</dbReference>
<dbReference type="HOGENOM" id="CLU_050977_0_0_6"/>
<dbReference type="InParanoid" id="P77337"/>
<dbReference type="OMA" id="RIYAYWL"/>
<dbReference type="OrthoDB" id="103324at2"/>
<dbReference type="PhylomeDB" id="P77337"/>
<dbReference type="BioCyc" id="EcoCyc:G6922-MONOMER"/>
<dbReference type="PRO" id="PR:P77337"/>
<dbReference type="Proteomes" id="UP000000625">
    <property type="component" value="Chromosome"/>
</dbReference>
<dbReference type="GO" id="GO:0071949">
    <property type="term" value="F:FAD binding"/>
    <property type="evidence" value="ECO:0007669"/>
    <property type="project" value="InterPro"/>
</dbReference>
<dbReference type="GO" id="GO:0016491">
    <property type="term" value="F:oxidoreductase activity"/>
    <property type="evidence" value="ECO:0007669"/>
    <property type="project" value="UniProtKB-KW"/>
</dbReference>
<dbReference type="Gene3D" id="3.50.50.60">
    <property type="entry name" value="FAD/NAD(P)-binding domain"/>
    <property type="match status" value="1"/>
</dbReference>
<dbReference type="InterPro" id="IPR002938">
    <property type="entry name" value="FAD-bd"/>
</dbReference>
<dbReference type="InterPro" id="IPR036188">
    <property type="entry name" value="FAD/NAD-bd_sf"/>
</dbReference>
<dbReference type="InterPro" id="IPR039651">
    <property type="entry name" value="FixC-like"/>
</dbReference>
<dbReference type="NCBIfam" id="NF007450">
    <property type="entry name" value="PRK10015.1"/>
    <property type="match status" value="1"/>
</dbReference>
<dbReference type="NCBIfam" id="NF007542">
    <property type="entry name" value="PRK10157.1"/>
    <property type="match status" value="1"/>
</dbReference>
<dbReference type="PANTHER" id="PTHR43624">
    <property type="entry name" value="ELECTRON TRANSFER FLAVOPROTEIN-QUINONE OXIDOREDUCTASE YDIS-RELATED"/>
    <property type="match status" value="1"/>
</dbReference>
<dbReference type="PANTHER" id="PTHR43624:SF2">
    <property type="entry name" value="ELECTRON TRANSFER FLAVOPROTEIN-QUINONE OXIDOREDUCTASE YDIS-RELATED"/>
    <property type="match status" value="1"/>
</dbReference>
<dbReference type="Pfam" id="PF01494">
    <property type="entry name" value="FAD_binding_3"/>
    <property type="match status" value="1"/>
</dbReference>
<dbReference type="PRINTS" id="PR00420">
    <property type="entry name" value="RNGMNOXGNASE"/>
</dbReference>
<dbReference type="SUPFAM" id="SSF54373">
    <property type="entry name" value="FAD-linked reductases, C-terminal domain"/>
    <property type="match status" value="1"/>
</dbReference>
<dbReference type="SUPFAM" id="SSF51905">
    <property type="entry name" value="FAD/NAD(P)-binding domain"/>
    <property type="match status" value="1"/>
</dbReference>
<accession>P77337</accession>
<organism>
    <name type="scientific">Escherichia coli (strain K12)</name>
    <dbReference type="NCBI Taxonomy" id="83333"/>
    <lineage>
        <taxon>Bacteria</taxon>
        <taxon>Pseudomonadati</taxon>
        <taxon>Pseudomonadota</taxon>
        <taxon>Gammaproteobacteria</taxon>
        <taxon>Enterobacterales</taxon>
        <taxon>Enterobacteriaceae</taxon>
        <taxon>Escherichia</taxon>
    </lineage>
</organism>
<reference key="1">
    <citation type="journal article" date="1996" name="DNA Res.">
        <title>A 570-kb DNA sequence of the Escherichia coli K-12 genome corresponding to the 28.0-40.1 min region on the linkage map.</title>
        <authorList>
            <person name="Aiba H."/>
            <person name="Baba T."/>
            <person name="Fujita K."/>
            <person name="Hayashi K."/>
            <person name="Inada T."/>
            <person name="Isono K."/>
            <person name="Itoh T."/>
            <person name="Kasai H."/>
            <person name="Kashimoto K."/>
            <person name="Kimura S."/>
            <person name="Kitakawa M."/>
            <person name="Kitagawa M."/>
            <person name="Makino K."/>
            <person name="Miki T."/>
            <person name="Mizobuchi K."/>
            <person name="Mori H."/>
            <person name="Mori T."/>
            <person name="Motomura K."/>
            <person name="Nakade S."/>
            <person name="Nakamura Y."/>
            <person name="Nashimoto H."/>
            <person name="Nishio Y."/>
            <person name="Oshima T."/>
            <person name="Saito N."/>
            <person name="Sampei G."/>
            <person name="Seki Y."/>
            <person name="Sivasundaram S."/>
            <person name="Tagami H."/>
            <person name="Takeda J."/>
            <person name="Takemoto K."/>
            <person name="Takeuchi Y."/>
            <person name="Wada C."/>
            <person name="Yamamoto Y."/>
            <person name="Horiuchi T."/>
        </authorList>
    </citation>
    <scope>NUCLEOTIDE SEQUENCE [LARGE SCALE GENOMIC DNA]</scope>
    <source>
        <strain>K12 / W3110 / ATCC 27325 / DSM 5911</strain>
    </source>
</reference>
<reference key="2">
    <citation type="journal article" date="1997" name="Science">
        <title>The complete genome sequence of Escherichia coli K-12.</title>
        <authorList>
            <person name="Blattner F.R."/>
            <person name="Plunkett G. III"/>
            <person name="Bloch C.A."/>
            <person name="Perna N.T."/>
            <person name="Burland V."/>
            <person name="Riley M."/>
            <person name="Collado-Vides J."/>
            <person name="Glasner J.D."/>
            <person name="Rode C.K."/>
            <person name="Mayhew G.F."/>
            <person name="Gregor J."/>
            <person name="Davis N.W."/>
            <person name="Kirkpatrick H.A."/>
            <person name="Goeden M.A."/>
            <person name="Rose D.J."/>
            <person name="Mau B."/>
            <person name="Shao Y."/>
        </authorList>
    </citation>
    <scope>NUCLEOTIDE SEQUENCE [LARGE SCALE GENOMIC DNA]</scope>
    <source>
        <strain>K12 / MG1655 / ATCC 47076</strain>
    </source>
</reference>
<reference key="3">
    <citation type="journal article" date="2006" name="Mol. Syst. Biol.">
        <title>Highly accurate genome sequences of Escherichia coli K-12 strains MG1655 and W3110.</title>
        <authorList>
            <person name="Hayashi K."/>
            <person name="Morooka N."/>
            <person name="Yamamoto Y."/>
            <person name="Fujita K."/>
            <person name="Isono K."/>
            <person name="Choi S."/>
            <person name="Ohtsubo E."/>
            <person name="Baba T."/>
            <person name="Wanner B.L."/>
            <person name="Mori H."/>
            <person name="Horiuchi T."/>
        </authorList>
    </citation>
    <scope>NUCLEOTIDE SEQUENCE [LARGE SCALE GENOMIC DNA]</scope>
    <source>
        <strain>K12 / W3110 / ATCC 27325 / DSM 5911</strain>
    </source>
</reference>
<protein>
    <recommendedName>
        <fullName>Probable electron transfer flavoprotein-quinone oxidoreductase YdiS</fullName>
        <ecNumber>1.5.5.-</ecNumber>
    </recommendedName>
</protein>
<gene>
    <name type="primary">ydiS</name>
    <name type="ordered locus">b1699</name>
    <name type="ordered locus">JW1689</name>
</gene>
<keyword id="KW-0274">FAD</keyword>
<keyword id="KW-0285">Flavoprotein</keyword>
<keyword id="KW-0560">Oxidoreductase</keyword>
<keyword id="KW-1185">Reference proteome</keyword>
<sequence length="429" mass="45923">MSDDKFDAIVVGAGVAGSVAALVMARAGLDVLVIERGDSAGCKNMTGGRLYAHTLEAIIPGFAVSAPVERKVTREKISFLTEESAVTLDFHREQPDVPQHASYTVLRNRLDPWLMEQAEQAGAQFIPGVRVDALVREGNKVTGVQAGDDILEANVVILADGVNSMLGRSLGMVPASDPHHYAVGVKEVIGLTPEQINDRFNITGEEGAAWLFAGSPSDGLMGGGFLYTNKDSISLGLVCGLGDIAHAQKSVPQMLEDFKQHPAIRPLISGGKLLEYSAHMVPEGGLAMVPQLVNEGVMIVGDAAGFCLNLGFTVRGMDLAIASAQAAATTVIAAKERADFSASSLAQYKRELEQSCVMRDMQHFRKIPALMENPRLFSQYPRMVADIMNEMFTIDGKPNQPVRKMIMGHAKKIGLINLLKDGIKGATAL</sequence>